<evidence type="ECO:0000255" key="1">
    <source>
        <dbReference type="HAMAP-Rule" id="MF_00283"/>
    </source>
</evidence>
<accession>Q48JR8</accession>
<organism>
    <name type="scientific">Pseudomonas savastanoi pv. phaseolicola (strain 1448A / Race 6)</name>
    <name type="common">Pseudomonas syringae pv. phaseolicola (strain 1448A / Race 6)</name>
    <dbReference type="NCBI Taxonomy" id="264730"/>
    <lineage>
        <taxon>Bacteria</taxon>
        <taxon>Pseudomonadati</taxon>
        <taxon>Pseudomonadota</taxon>
        <taxon>Gammaproteobacteria</taxon>
        <taxon>Pseudomonadales</taxon>
        <taxon>Pseudomonadaceae</taxon>
        <taxon>Pseudomonas</taxon>
    </lineage>
</organism>
<protein>
    <recommendedName>
        <fullName evidence="1">Phenylalanine--tRNA ligase beta subunit</fullName>
        <ecNumber evidence="1">6.1.1.20</ecNumber>
    </recommendedName>
    <alternativeName>
        <fullName evidence="1">Phenylalanyl-tRNA synthetase beta subunit</fullName>
        <shortName evidence="1">PheRS</shortName>
    </alternativeName>
</protein>
<dbReference type="EC" id="6.1.1.20" evidence="1"/>
<dbReference type="EMBL" id="CP000058">
    <property type="protein sequence ID" value="AAZ35714.1"/>
    <property type="molecule type" value="Genomic_DNA"/>
</dbReference>
<dbReference type="RefSeq" id="WP_004667669.1">
    <property type="nucleotide sequence ID" value="NC_005773.3"/>
</dbReference>
<dbReference type="SMR" id="Q48JR8"/>
<dbReference type="KEGG" id="psp:PSPPH_2140"/>
<dbReference type="eggNOG" id="COG0072">
    <property type="taxonomic scope" value="Bacteria"/>
</dbReference>
<dbReference type="HOGENOM" id="CLU_016891_0_0_6"/>
<dbReference type="Proteomes" id="UP000000551">
    <property type="component" value="Chromosome"/>
</dbReference>
<dbReference type="GO" id="GO:0009328">
    <property type="term" value="C:phenylalanine-tRNA ligase complex"/>
    <property type="evidence" value="ECO:0007669"/>
    <property type="project" value="TreeGrafter"/>
</dbReference>
<dbReference type="GO" id="GO:0005524">
    <property type="term" value="F:ATP binding"/>
    <property type="evidence" value="ECO:0007669"/>
    <property type="project" value="UniProtKB-UniRule"/>
</dbReference>
<dbReference type="GO" id="GO:0000287">
    <property type="term" value="F:magnesium ion binding"/>
    <property type="evidence" value="ECO:0007669"/>
    <property type="project" value="UniProtKB-UniRule"/>
</dbReference>
<dbReference type="GO" id="GO:0004826">
    <property type="term" value="F:phenylalanine-tRNA ligase activity"/>
    <property type="evidence" value="ECO:0007669"/>
    <property type="project" value="UniProtKB-UniRule"/>
</dbReference>
<dbReference type="GO" id="GO:0000049">
    <property type="term" value="F:tRNA binding"/>
    <property type="evidence" value="ECO:0007669"/>
    <property type="project" value="UniProtKB-KW"/>
</dbReference>
<dbReference type="GO" id="GO:0006432">
    <property type="term" value="P:phenylalanyl-tRNA aminoacylation"/>
    <property type="evidence" value="ECO:0007669"/>
    <property type="project" value="UniProtKB-UniRule"/>
</dbReference>
<dbReference type="CDD" id="cd00769">
    <property type="entry name" value="PheRS_beta_core"/>
    <property type="match status" value="1"/>
</dbReference>
<dbReference type="CDD" id="cd02796">
    <property type="entry name" value="tRNA_bind_bactPheRS"/>
    <property type="match status" value="1"/>
</dbReference>
<dbReference type="FunFam" id="2.40.50.140:FF:000045">
    <property type="entry name" value="Phenylalanine--tRNA ligase beta subunit"/>
    <property type="match status" value="1"/>
</dbReference>
<dbReference type="FunFam" id="3.30.56.10:FF:000002">
    <property type="entry name" value="Phenylalanine--tRNA ligase beta subunit"/>
    <property type="match status" value="1"/>
</dbReference>
<dbReference type="FunFam" id="3.30.70.380:FF:000001">
    <property type="entry name" value="Phenylalanine--tRNA ligase beta subunit"/>
    <property type="match status" value="1"/>
</dbReference>
<dbReference type="FunFam" id="3.30.930.10:FF:000022">
    <property type="entry name" value="Phenylalanine--tRNA ligase beta subunit"/>
    <property type="match status" value="1"/>
</dbReference>
<dbReference type="FunFam" id="3.50.40.10:FF:000001">
    <property type="entry name" value="Phenylalanine--tRNA ligase beta subunit"/>
    <property type="match status" value="1"/>
</dbReference>
<dbReference type="Gene3D" id="3.30.56.10">
    <property type="match status" value="2"/>
</dbReference>
<dbReference type="Gene3D" id="3.30.930.10">
    <property type="entry name" value="Bira Bifunctional Protein, Domain 2"/>
    <property type="match status" value="1"/>
</dbReference>
<dbReference type="Gene3D" id="3.30.70.380">
    <property type="entry name" value="Ferrodoxin-fold anticodon-binding domain"/>
    <property type="match status" value="1"/>
</dbReference>
<dbReference type="Gene3D" id="2.40.50.140">
    <property type="entry name" value="Nucleic acid-binding proteins"/>
    <property type="match status" value="1"/>
</dbReference>
<dbReference type="Gene3D" id="3.50.40.10">
    <property type="entry name" value="Phenylalanyl-trna Synthetase, Chain B, domain 3"/>
    <property type="match status" value="1"/>
</dbReference>
<dbReference type="HAMAP" id="MF_00283">
    <property type="entry name" value="Phe_tRNA_synth_beta1"/>
    <property type="match status" value="1"/>
</dbReference>
<dbReference type="InterPro" id="IPR045864">
    <property type="entry name" value="aa-tRNA-synth_II/BPL/LPL"/>
</dbReference>
<dbReference type="InterPro" id="IPR005146">
    <property type="entry name" value="B3/B4_tRNA-bd"/>
</dbReference>
<dbReference type="InterPro" id="IPR009061">
    <property type="entry name" value="DNA-bd_dom_put_sf"/>
</dbReference>
<dbReference type="InterPro" id="IPR005121">
    <property type="entry name" value="Fdx_antiC-bd"/>
</dbReference>
<dbReference type="InterPro" id="IPR036690">
    <property type="entry name" value="Fdx_antiC-bd_sf"/>
</dbReference>
<dbReference type="InterPro" id="IPR012340">
    <property type="entry name" value="NA-bd_OB-fold"/>
</dbReference>
<dbReference type="InterPro" id="IPR045060">
    <property type="entry name" value="Phe-tRNA-ligase_IIc_bsu"/>
</dbReference>
<dbReference type="InterPro" id="IPR004532">
    <property type="entry name" value="Phe-tRNA-ligase_IIc_bsu_bact"/>
</dbReference>
<dbReference type="InterPro" id="IPR020825">
    <property type="entry name" value="Phe-tRNA_synthase-like_B3/B4"/>
</dbReference>
<dbReference type="InterPro" id="IPR041616">
    <property type="entry name" value="PheRS_beta_core"/>
</dbReference>
<dbReference type="InterPro" id="IPR002547">
    <property type="entry name" value="tRNA-bd_dom"/>
</dbReference>
<dbReference type="InterPro" id="IPR033714">
    <property type="entry name" value="tRNA_bind_bactPheRS"/>
</dbReference>
<dbReference type="InterPro" id="IPR005147">
    <property type="entry name" value="tRNA_synthase_B5-dom"/>
</dbReference>
<dbReference type="NCBIfam" id="TIGR00472">
    <property type="entry name" value="pheT_bact"/>
    <property type="match status" value="1"/>
</dbReference>
<dbReference type="NCBIfam" id="NF045760">
    <property type="entry name" value="YtpR"/>
    <property type="match status" value="1"/>
</dbReference>
<dbReference type="PANTHER" id="PTHR10947:SF0">
    <property type="entry name" value="PHENYLALANINE--TRNA LIGASE BETA SUBUNIT"/>
    <property type="match status" value="1"/>
</dbReference>
<dbReference type="PANTHER" id="PTHR10947">
    <property type="entry name" value="PHENYLALANYL-TRNA SYNTHETASE BETA CHAIN AND LEUCINE-RICH REPEAT-CONTAINING PROTEIN 47"/>
    <property type="match status" value="1"/>
</dbReference>
<dbReference type="Pfam" id="PF03483">
    <property type="entry name" value="B3_4"/>
    <property type="match status" value="1"/>
</dbReference>
<dbReference type="Pfam" id="PF03484">
    <property type="entry name" value="B5"/>
    <property type="match status" value="1"/>
</dbReference>
<dbReference type="Pfam" id="PF03147">
    <property type="entry name" value="FDX-ACB"/>
    <property type="match status" value="1"/>
</dbReference>
<dbReference type="Pfam" id="PF01588">
    <property type="entry name" value="tRNA_bind"/>
    <property type="match status" value="1"/>
</dbReference>
<dbReference type="Pfam" id="PF17759">
    <property type="entry name" value="tRNA_synthFbeta"/>
    <property type="match status" value="1"/>
</dbReference>
<dbReference type="SMART" id="SM00873">
    <property type="entry name" value="B3_4"/>
    <property type="match status" value="1"/>
</dbReference>
<dbReference type="SMART" id="SM00874">
    <property type="entry name" value="B5"/>
    <property type="match status" value="1"/>
</dbReference>
<dbReference type="SMART" id="SM00896">
    <property type="entry name" value="FDX-ACB"/>
    <property type="match status" value="1"/>
</dbReference>
<dbReference type="SUPFAM" id="SSF54991">
    <property type="entry name" value="Anticodon-binding domain of PheRS"/>
    <property type="match status" value="1"/>
</dbReference>
<dbReference type="SUPFAM" id="SSF55681">
    <property type="entry name" value="Class II aaRS and biotin synthetases"/>
    <property type="match status" value="1"/>
</dbReference>
<dbReference type="SUPFAM" id="SSF50249">
    <property type="entry name" value="Nucleic acid-binding proteins"/>
    <property type="match status" value="1"/>
</dbReference>
<dbReference type="SUPFAM" id="SSF56037">
    <property type="entry name" value="PheT/TilS domain"/>
    <property type="match status" value="1"/>
</dbReference>
<dbReference type="SUPFAM" id="SSF46955">
    <property type="entry name" value="Putative DNA-binding domain"/>
    <property type="match status" value="1"/>
</dbReference>
<dbReference type="PROSITE" id="PS51483">
    <property type="entry name" value="B5"/>
    <property type="match status" value="1"/>
</dbReference>
<dbReference type="PROSITE" id="PS51447">
    <property type="entry name" value="FDX_ACB"/>
    <property type="match status" value="1"/>
</dbReference>
<dbReference type="PROSITE" id="PS50886">
    <property type="entry name" value="TRBD"/>
    <property type="match status" value="1"/>
</dbReference>
<name>SYFB_PSE14</name>
<gene>
    <name evidence="1" type="primary">pheT</name>
    <name type="ordered locus">PSPPH_2140</name>
</gene>
<keyword id="KW-0030">Aminoacyl-tRNA synthetase</keyword>
<keyword id="KW-0067">ATP-binding</keyword>
<keyword id="KW-0963">Cytoplasm</keyword>
<keyword id="KW-0436">Ligase</keyword>
<keyword id="KW-0460">Magnesium</keyword>
<keyword id="KW-0479">Metal-binding</keyword>
<keyword id="KW-0547">Nucleotide-binding</keyword>
<keyword id="KW-0648">Protein biosynthesis</keyword>
<keyword id="KW-0694">RNA-binding</keyword>
<keyword id="KW-0820">tRNA-binding</keyword>
<reference key="1">
    <citation type="journal article" date="2005" name="J. Bacteriol.">
        <title>Whole-genome sequence analysis of Pseudomonas syringae pv. phaseolicola 1448A reveals divergence among pathovars in genes involved in virulence and transposition.</title>
        <authorList>
            <person name="Joardar V."/>
            <person name="Lindeberg M."/>
            <person name="Jackson R.W."/>
            <person name="Selengut J."/>
            <person name="Dodson R."/>
            <person name="Brinkac L.M."/>
            <person name="Daugherty S.C."/>
            <person name="DeBoy R.T."/>
            <person name="Durkin A.S."/>
            <person name="Gwinn Giglio M."/>
            <person name="Madupu R."/>
            <person name="Nelson W.C."/>
            <person name="Rosovitz M.J."/>
            <person name="Sullivan S.A."/>
            <person name="Crabtree J."/>
            <person name="Creasy T."/>
            <person name="Davidsen T.M."/>
            <person name="Haft D.H."/>
            <person name="Zafar N."/>
            <person name="Zhou L."/>
            <person name="Halpin R."/>
            <person name="Holley T."/>
            <person name="Khouri H.M."/>
            <person name="Feldblyum T.V."/>
            <person name="White O."/>
            <person name="Fraser C.M."/>
            <person name="Chatterjee A.K."/>
            <person name="Cartinhour S."/>
            <person name="Schneider D."/>
            <person name="Mansfield J.W."/>
            <person name="Collmer A."/>
            <person name="Buell R."/>
        </authorList>
    </citation>
    <scope>NUCLEOTIDE SEQUENCE [LARGE SCALE GENOMIC DNA]</scope>
    <source>
        <strain>1448A / Race 6</strain>
    </source>
</reference>
<comment type="catalytic activity">
    <reaction evidence="1">
        <text>tRNA(Phe) + L-phenylalanine + ATP = L-phenylalanyl-tRNA(Phe) + AMP + diphosphate + H(+)</text>
        <dbReference type="Rhea" id="RHEA:19413"/>
        <dbReference type="Rhea" id="RHEA-COMP:9668"/>
        <dbReference type="Rhea" id="RHEA-COMP:9699"/>
        <dbReference type="ChEBI" id="CHEBI:15378"/>
        <dbReference type="ChEBI" id="CHEBI:30616"/>
        <dbReference type="ChEBI" id="CHEBI:33019"/>
        <dbReference type="ChEBI" id="CHEBI:58095"/>
        <dbReference type="ChEBI" id="CHEBI:78442"/>
        <dbReference type="ChEBI" id="CHEBI:78531"/>
        <dbReference type="ChEBI" id="CHEBI:456215"/>
        <dbReference type="EC" id="6.1.1.20"/>
    </reaction>
</comment>
<comment type="cofactor">
    <cofactor evidence="1">
        <name>Mg(2+)</name>
        <dbReference type="ChEBI" id="CHEBI:18420"/>
    </cofactor>
    <text evidence="1">Binds 2 magnesium ions per tetramer.</text>
</comment>
<comment type="subunit">
    <text evidence="1">Tetramer of two alpha and two beta subunits.</text>
</comment>
<comment type="subcellular location">
    <subcellularLocation>
        <location evidence="1">Cytoplasm</location>
    </subcellularLocation>
</comment>
<comment type="similarity">
    <text evidence="1">Belongs to the phenylalanyl-tRNA synthetase beta subunit family. Type 1 subfamily.</text>
</comment>
<proteinExistence type="inferred from homology"/>
<sequence length="792" mass="86491">MKFSEQWLRGWVSPQVSRDELVARLSMAGLEVDSVTLAAGVFSGVVVGEVLSTEQHPDADKLRVCQVSNGSETFQVVCGAPNVRPGLKIPFAMIGAELPGDFKIKKAKLRGVESNGMLCSAAELQAGEGNDGLMELAADAPVGEDIRAYLSLDDASIEVDLTPNRGDCLSVAGLAREVGALYATDVTRPQIAAVSAVHDEVRPVEVLAPAACPRYLGRVIRNVDLSRPTPLWMVERLRRSDVRSIDAAVDITNYVMLELGQPLHAFDLAEINGGIRVRMAEEGEKLVLLDGQEVSLRADTLVIADHQRALAIAGVMGGEHSGVTAGTRDIFLESAFFDTISVAGKARSYGLHTDASHRYERGVDWELAREAMERATGLLLEITGGEAGPITEVVSEQHLPSIAPVTLRASRVEQMLGLVIENAEIERLLTGLGLAVTTEADGQWRVEVPSHRFDISLEVDLIEELARLYGYNRLPVRYPQARLAPQAKAEAKGDLPELRRLLVARGYQEAITYSFIDPKWFELFSPGAKPLLLANPISNDMAAMRASLWPGLVKALQHNLNRQQDRVRMFESGLRFVGQLDGLKQEPMLAGVVCGSRLPEGWAQGRDAVDFFDVKADVEAVLGFAGALGEFTFTPGQHPALHPGQTARIERDGREVGFLGAIHPELSKTLGLDRPVFVFELVLAEVSTGRLPKFHELSRFPEVRRDLALLADRDVSASAVLDVIRENAGEWLTDLRLFDVYQGKGIDPHRKSLAVGLTWQHPSRTLNDDEVNATTLAILTSLEERLNATLRK</sequence>
<feature type="chain" id="PRO_0000232078" description="Phenylalanine--tRNA ligase beta subunit">
    <location>
        <begin position="1"/>
        <end position="792"/>
    </location>
</feature>
<feature type="domain" description="tRNA-binding" evidence="1">
    <location>
        <begin position="39"/>
        <end position="147"/>
    </location>
</feature>
<feature type="domain" description="B5" evidence="1">
    <location>
        <begin position="400"/>
        <end position="476"/>
    </location>
</feature>
<feature type="domain" description="FDX-ACB" evidence="1">
    <location>
        <begin position="698"/>
        <end position="791"/>
    </location>
</feature>
<feature type="binding site" evidence="1">
    <location>
        <position position="454"/>
    </location>
    <ligand>
        <name>Mg(2+)</name>
        <dbReference type="ChEBI" id="CHEBI:18420"/>
        <note>shared with alpha subunit</note>
    </ligand>
</feature>
<feature type="binding site" evidence="1">
    <location>
        <position position="460"/>
    </location>
    <ligand>
        <name>Mg(2+)</name>
        <dbReference type="ChEBI" id="CHEBI:18420"/>
        <note>shared with alpha subunit</note>
    </ligand>
</feature>
<feature type="binding site" evidence="1">
    <location>
        <position position="463"/>
    </location>
    <ligand>
        <name>Mg(2+)</name>
        <dbReference type="ChEBI" id="CHEBI:18420"/>
        <note>shared with alpha subunit</note>
    </ligand>
</feature>
<feature type="binding site" evidence="1">
    <location>
        <position position="464"/>
    </location>
    <ligand>
        <name>Mg(2+)</name>
        <dbReference type="ChEBI" id="CHEBI:18420"/>
        <note>shared with alpha subunit</note>
    </ligand>
</feature>